<name>RSMG_YERPP</name>
<proteinExistence type="inferred from homology"/>
<organism>
    <name type="scientific">Yersinia pestis (strain Pestoides F)</name>
    <dbReference type="NCBI Taxonomy" id="386656"/>
    <lineage>
        <taxon>Bacteria</taxon>
        <taxon>Pseudomonadati</taxon>
        <taxon>Pseudomonadota</taxon>
        <taxon>Gammaproteobacteria</taxon>
        <taxon>Enterobacterales</taxon>
        <taxon>Yersiniaceae</taxon>
        <taxon>Yersinia</taxon>
    </lineage>
</organism>
<sequence>MLKKLDSLLTVAGITLPDQQKHQLIGYVELLDKWNKAYNLTSVRDPQQMLVRHILDSIVVNPHLQGSRFIDVGTGPGLPGIPLAIVRPDAHFTLLDSLGKRVRFLRQVQHELGLNNIEPVQSRVEAFTSEPPFDGVISRAFASLQDMLSWCHHLPAKPEGRFYALKGVRPDDELAVLPEDIVLESVIKLDVPELDGERHLIILKSN</sequence>
<comment type="function">
    <text evidence="1">Specifically methylates the N7 position of guanine in position 527 of 16S rRNA.</text>
</comment>
<comment type="catalytic activity">
    <reaction evidence="1">
        <text>guanosine(527) in 16S rRNA + S-adenosyl-L-methionine = N(7)-methylguanosine(527) in 16S rRNA + S-adenosyl-L-homocysteine</text>
        <dbReference type="Rhea" id="RHEA:42732"/>
        <dbReference type="Rhea" id="RHEA-COMP:10209"/>
        <dbReference type="Rhea" id="RHEA-COMP:10210"/>
        <dbReference type="ChEBI" id="CHEBI:57856"/>
        <dbReference type="ChEBI" id="CHEBI:59789"/>
        <dbReference type="ChEBI" id="CHEBI:74269"/>
        <dbReference type="ChEBI" id="CHEBI:74480"/>
        <dbReference type="EC" id="2.1.1.170"/>
    </reaction>
</comment>
<comment type="subcellular location">
    <subcellularLocation>
        <location evidence="1">Cytoplasm</location>
    </subcellularLocation>
</comment>
<comment type="similarity">
    <text evidence="1">Belongs to the methyltransferase superfamily. RNA methyltransferase RsmG family.</text>
</comment>
<reference key="1">
    <citation type="submission" date="2007-02" db="EMBL/GenBank/DDBJ databases">
        <title>Complete sequence of chromosome of Yersinia pestis Pestoides F.</title>
        <authorList>
            <consortium name="US DOE Joint Genome Institute"/>
            <person name="Copeland A."/>
            <person name="Lucas S."/>
            <person name="Lapidus A."/>
            <person name="Barry K."/>
            <person name="Detter J.C."/>
            <person name="Glavina del Rio T."/>
            <person name="Hammon N."/>
            <person name="Israni S."/>
            <person name="Dalin E."/>
            <person name="Tice H."/>
            <person name="Pitluck S."/>
            <person name="Di Bartolo G."/>
            <person name="Chain P."/>
            <person name="Malfatti S."/>
            <person name="Shin M."/>
            <person name="Vergez L."/>
            <person name="Schmutz J."/>
            <person name="Larimer F."/>
            <person name="Land M."/>
            <person name="Hauser L."/>
            <person name="Worsham P."/>
            <person name="Chu M."/>
            <person name="Bearden S."/>
            <person name="Garcia E."/>
            <person name="Richardson P."/>
        </authorList>
    </citation>
    <scope>NUCLEOTIDE SEQUENCE [LARGE SCALE GENOMIC DNA]</scope>
    <source>
        <strain>Pestoides F</strain>
    </source>
</reference>
<dbReference type="EC" id="2.1.1.170" evidence="1"/>
<dbReference type="EMBL" id="CP000668">
    <property type="protein sequence ID" value="ABP42247.1"/>
    <property type="molecule type" value="Genomic_DNA"/>
</dbReference>
<dbReference type="RefSeq" id="WP_002212261.1">
    <property type="nucleotide sequence ID" value="NZ_CP009715.1"/>
</dbReference>
<dbReference type="SMR" id="A4TSI5"/>
<dbReference type="GeneID" id="57974595"/>
<dbReference type="KEGG" id="ypp:YPDSF_3906"/>
<dbReference type="PATRIC" id="fig|386656.14.peg.611"/>
<dbReference type="GO" id="GO:0005829">
    <property type="term" value="C:cytosol"/>
    <property type="evidence" value="ECO:0007669"/>
    <property type="project" value="TreeGrafter"/>
</dbReference>
<dbReference type="GO" id="GO:0070043">
    <property type="term" value="F:rRNA (guanine-N7-)-methyltransferase activity"/>
    <property type="evidence" value="ECO:0007669"/>
    <property type="project" value="UniProtKB-UniRule"/>
</dbReference>
<dbReference type="CDD" id="cd02440">
    <property type="entry name" value="AdoMet_MTases"/>
    <property type="match status" value="1"/>
</dbReference>
<dbReference type="FunFam" id="3.40.50.150:FF:000032">
    <property type="entry name" value="Ribosomal RNA small subunit methyltransferase G"/>
    <property type="match status" value="1"/>
</dbReference>
<dbReference type="Gene3D" id="3.40.50.150">
    <property type="entry name" value="Vaccinia Virus protein VP39"/>
    <property type="match status" value="1"/>
</dbReference>
<dbReference type="HAMAP" id="MF_00074">
    <property type="entry name" value="16SrRNA_methyltr_G"/>
    <property type="match status" value="1"/>
</dbReference>
<dbReference type="InterPro" id="IPR003682">
    <property type="entry name" value="rRNA_ssu_MeTfrase_G"/>
</dbReference>
<dbReference type="InterPro" id="IPR029063">
    <property type="entry name" value="SAM-dependent_MTases_sf"/>
</dbReference>
<dbReference type="NCBIfam" id="TIGR00138">
    <property type="entry name" value="rsmG_gidB"/>
    <property type="match status" value="1"/>
</dbReference>
<dbReference type="PANTHER" id="PTHR31760">
    <property type="entry name" value="S-ADENOSYL-L-METHIONINE-DEPENDENT METHYLTRANSFERASES SUPERFAMILY PROTEIN"/>
    <property type="match status" value="1"/>
</dbReference>
<dbReference type="PANTHER" id="PTHR31760:SF0">
    <property type="entry name" value="S-ADENOSYL-L-METHIONINE-DEPENDENT METHYLTRANSFERASES SUPERFAMILY PROTEIN"/>
    <property type="match status" value="1"/>
</dbReference>
<dbReference type="Pfam" id="PF02527">
    <property type="entry name" value="GidB"/>
    <property type="match status" value="1"/>
</dbReference>
<dbReference type="PIRSF" id="PIRSF003078">
    <property type="entry name" value="GidB"/>
    <property type="match status" value="1"/>
</dbReference>
<dbReference type="SUPFAM" id="SSF53335">
    <property type="entry name" value="S-adenosyl-L-methionine-dependent methyltransferases"/>
    <property type="match status" value="1"/>
</dbReference>
<feature type="chain" id="PRO_1000010240" description="Ribosomal RNA small subunit methyltransferase G">
    <location>
        <begin position="1"/>
        <end position="206"/>
    </location>
</feature>
<feature type="binding site" evidence="1">
    <location>
        <position position="73"/>
    </location>
    <ligand>
        <name>S-adenosyl-L-methionine</name>
        <dbReference type="ChEBI" id="CHEBI:59789"/>
    </ligand>
</feature>
<feature type="binding site" evidence="1">
    <location>
        <position position="78"/>
    </location>
    <ligand>
        <name>S-adenosyl-L-methionine</name>
        <dbReference type="ChEBI" id="CHEBI:59789"/>
    </ligand>
</feature>
<feature type="binding site" evidence="1">
    <location>
        <begin position="124"/>
        <end position="125"/>
    </location>
    <ligand>
        <name>S-adenosyl-L-methionine</name>
        <dbReference type="ChEBI" id="CHEBI:59789"/>
    </ligand>
</feature>
<feature type="binding site" evidence="1">
    <location>
        <position position="139"/>
    </location>
    <ligand>
        <name>S-adenosyl-L-methionine</name>
        <dbReference type="ChEBI" id="CHEBI:59789"/>
    </ligand>
</feature>
<gene>
    <name evidence="1" type="primary">rsmG</name>
    <name type="ordered locus">YPDSF_3906</name>
</gene>
<protein>
    <recommendedName>
        <fullName evidence="1">Ribosomal RNA small subunit methyltransferase G</fullName>
        <ecNumber evidence="1">2.1.1.170</ecNumber>
    </recommendedName>
    <alternativeName>
        <fullName evidence="1">16S rRNA 7-methylguanosine methyltransferase</fullName>
        <shortName evidence="1">16S rRNA m7G methyltransferase</shortName>
    </alternativeName>
</protein>
<keyword id="KW-0963">Cytoplasm</keyword>
<keyword id="KW-0489">Methyltransferase</keyword>
<keyword id="KW-0698">rRNA processing</keyword>
<keyword id="KW-0949">S-adenosyl-L-methionine</keyword>
<keyword id="KW-0808">Transferase</keyword>
<evidence type="ECO:0000255" key="1">
    <source>
        <dbReference type="HAMAP-Rule" id="MF_00074"/>
    </source>
</evidence>
<accession>A4TSI5</accession>